<organism>
    <name type="scientific">Loxosceles sabina</name>
    <name type="common">Tucson recluse spider</name>
    <dbReference type="NCBI Taxonomy" id="571529"/>
    <lineage>
        <taxon>Eukaryota</taxon>
        <taxon>Metazoa</taxon>
        <taxon>Ecdysozoa</taxon>
        <taxon>Arthropoda</taxon>
        <taxon>Chelicerata</taxon>
        <taxon>Arachnida</taxon>
        <taxon>Araneae</taxon>
        <taxon>Araneomorphae</taxon>
        <taxon>Haplogynae</taxon>
        <taxon>Scytodoidea</taxon>
        <taxon>Sicariidae</taxon>
        <taxon>Loxosceles</taxon>
    </lineage>
</organism>
<sequence length="276" mass="31455">WIMGHMVNAIYQIDEFVNLGANSIETDVSFDDSANPEYTYHGVPCDCRRWCKKWEYFNNFLKALRKATTPGDSKYHEKLVLVVFDLKTNSLYDHQAYDAGKKLAKNLLQHYWNNGNNGGRAYIVLSIPNLSHYKLITGFKETLKNEGHPELMEKVGFDFSGNDNIDQVAKAYKKAGVTGRVWQSDGITNCIASFIRGLDRAKEAVANRDSSNGFINKVYYWTVDKRATTREALDAEVDGIMTNDPDVIADVLNESAYKAKFRIATYDDNPWETFKK</sequence>
<evidence type="ECO:0000250" key="1">
    <source>
        <dbReference type="UniProtKB" id="A0A0D4WTV1"/>
    </source>
</evidence>
<evidence type="ECO:0000250" key="2">
    <source>
        <dbReference type="UniProtKB" id="A0A0D4WV12"/>
    </source>
</evidence>
<evidence type="ECO:0000250" key="3">
    <source>
        <dbReference type="UniProtKB" id="P0CE80"/>
    </source>
</evidence>
<evidence type="ECO:0000250" key="4">
    <source>
        <dbReference type="UniProtKB" id="Q4ZFU2"/>
    </source>
</evidence>
<evidence type="ECO:0000250" key="5">
    <source>
        <dbReference type="UniProtKB" id="Q8I914"/>
    </source>
</evidence>
<evidence type="ECO:0000255" key="6"/>
<evidence type="ECO:0000303" key="7">
    <source>
    </source>
</evidence>
<evidence type="ECO:0000305" key="8"/>
<evidence type="ECO:0000305" key="9">
    <source>
    </source>
</evidence>
<name>A1L3_LOXSA</name>
<comment type="function">
    <text evidence="1 3">Dermonecrotic toxins cleave the phosphodiester linkage between the phosphate and headgroup of certain phospholipids (sphingolipid and lysolipid substrates), forming an alcohol (often choline) and a cyclic phosphate (By similarity). This toxin acts on sphingomyelin (SM) (By similarity). It may also act on ceramide phosphoethanolamine (CPE), lysophosphatidylcholine (LPC) and lysophosphatidylethanolamine (LPE), but not on lysophosphatidylserine (LPS), and lysophosphatidylglycerol (LPG) (By similarity). It acts by transphosphatidylation, releasing exclusively cyclic phosphate products as second products (By similarity). Induces dermonecrosis, hemolysis, increased vascular permeability, edema, inflammatory response, and platelet aggregation (By similarity).</text>
</comment>
<comment type="catalytic activity">
    <reaction evidence="1">
        <text>an N-(acyl)-sphingosylphosphocholine = an N-(acyl)-sphingosyl-1,3-cyclic phosphate + choline</text>
        <dbReference type="Rhea" id="RHEA:60652"/>
        <dbReference type="ChEBI" id="CHEBI:15354"/>
        <dbReference type="ChEBI" id="CHEBI:64583"/>
        <dbReference type="ChEBI" id="CHEBI:143892"/>
    </reaction>
</comment>
<comment type="catalytic activity">
    <reaction evidence="1">
        <text>an N-(acyl)-sphingosylphosphoethanolamine = an N-(acyl)-sphingosyl-1,3-cyclic phosphate + ethanolamine</text>
        <dbReference type="Rhea" id="RHEA:60648"/>
        <dbReference type="ChEBI" id="CHEBI:57603"/>
        <dbReference type="ChEBI" id="CHEBI:143891"/>
        <dbReference type="ChEBI" id="CHEBI:143892"/>
    </reaction>
</comment>
<comment type="catalytic activity">
    <reaction evidence="1">
        <text>a 1-acyl-sn-glycero-3-phosphocholine = a 1-acyl-sn-glycero-2,3-cyclic phosphate + choline</text>
        <dbReference type="Rhea" id="RHEA:60700"/>
        <dbReference type="ChEBI" id="CHEBI:15354"/>
        <dbReference type="ChEBI" id="CHEBI:58168"/>
        <dbReference type="ChEBI" id="CHEBI:143947"/>
    </reaction>
</comment>
<comment type="catalytic activity">
    <reaction evidence="1">
        <text>a 1-acyl-sn-glycero-3-phosphoethanolamine = a 1-acyl-sn-glycero-2,3-cyclic phosphate + ethanolamine</text>
        <dbReference type="Rhea" id="RHEA:60704"/>
        <dbReference type="ChEBI" id="CHEBI:57603"/>
        <dbReference type="ChEBI" id="CHEBI:64381"/>
        <dbReference type="ChEBI" id="CHEBI:143947"/>
    </reaction>
</comment>
<comment type="cofactor">
    <cofactor evidence="5">
        <name>Mg(2+)</name>
        <dbReference type="ChEBI" id="CHEBI:18420"/>
    </cofactor>
    <text evidence="5">Binds 1 Mg(2+) ion per subunit.</text>
</comment>
<comment type="subcellular location">
    <subcellularLocation>
        <location evidence="9">Secreted</location>
    </subcellularLocation>
</comment>
<comment type="tissue specificity">
    <text evidence="9">Expressed by the venom gland.</text>
</comment>
<comment type="similarity">
    <text evidence="8">Belongs to the arthropod phospholipase D family. Class II subfamily.</text>
</comment>
<comment type="caution">
    <text evidence="1 2 4">The most common activity assay for dermonecrotic toxins detects enzymatic activity by monitoring choline release from substrate. Liberation of choline from sphingomyelin (SM) or lysophosphatidylcholine (LPC) is commonly assumed to result from substrate hydrolysis, giving either ceramide-1-phosphate (C1P) or lysophosphatidic acid (LPA), respectively, as a second product. However, two studies from Lajoie and colleagues (2013 and 2015) report the observation of exclusive formation of cyclic phosphate products as second products, resulting from intramolecular transphosphatidylation. Cyclic phosphates have vastly different biological properties from their monoester counterparts, and they may be relevant to the pathology of brown spider envenomation.</text>
</comment>
<feature type="chain" id="PRO_0000392794" description="Dermonecrotic toxin LsaSicTox-alphaIB2iii">
    <location>
        <begin position="1" status="less than"/>
        <end position="276"/>
    </location>
</feature>
<feature type="active site" evidence="5">
    <location>
        <position position="5"/>
    </location>
</feature>
<feature type="active site" description="Nucleophile" evidence="5">
    <location>
        <position position="41"/>
    </location>
</feature>
<feature type="binding site" evidence="5">
    <location>
        <position position="25"/>
    </location>
    <ligand>
        <name>Mg(2+)</name>
        <dbReference type="ChEBI" id="CHEBI:18420"/>
    </ligand>
</feature>
<feature type="binding site" evidence="5">
    <location>
        <position position="27"/>
    </location>
    <ligand>
        <name>Mg(2+)</name>
        <dbReference type="ChEBI" id="CHEBI:18420"/>
    </ligand>
</feature>
<feature type="binding site" evidence="5">
    <location>
        <position position="85"/>
    </location>
    <ligand>
        <name>Mg(2+)</name>
        <dbReference type="ChEBI" id="CHEBI:18420"/>
    </ligand>
</feature>
<feature type="glycosylation site" description="N-linked (GlcNAc...) asparagine" evidence="6">
    <location>
        <position position="129"/>
    </location>
</feature>
<feature type="glycosylation site" description="N-linked (GlcNAc...) asparagine" evidence="6">
    <location>
        <position position="253"/>
    </location>
</feature>
<feature type="disulfide bond" evidence="3">
    <location>
        <begin position="45"/>
        <end position="51"/>
    </location>
</feature>
<feature type="disulfide bond" evidence="3">
    <location>
        <begin position="47"/>
        <end position="190"/>
    </location>
</feature>
<feature type="non-terminal residue">
    <location>
        <position position="1"/>
    </location>
</feature>
<dbReference type="EC" id="4.6.1.-" evidence="4"/>
<dbReference type="EMBL" id="FJ171384">
    <property type="protein sequence ID" value="ACN48880.1"/>
    <property type="molecule type" value="mRNA"/>
</dbReference>
<dbReference type="SMR" id="C0JAU9"/>
<dbReference type="GO" id="GO:0005576">
    <property type="term" value="C:extracellular region"/>
    <property type="evidence" value="ECO:0007669"/>
    <property type="project" value="UniProtKB-SubCell"/>
</dbReference>
<dbReference type="GO" id="GO:0016829">
    <property type="term" value="F:lyase activity"/>
    <property type="evidence" value="ECO:0007669"/>
    <property type="project" value="UniProtKB-KW"/>
</dbReference>
<dbReference type="GO" id="GO:0046872">
    <property type="term" value="F:metal ion binding"/>
    <property type="evidence" value="ECO:0007669"/>
    <property type="project" value="UniProtKB-KW"/>
</dbReference>
<dbReference type="GO" id="GO:0008081">
    <property type="term" value="F:phosphoric diester hydrolase activity"/>
    <property type="evidence" value="ECO:0007669"/>
    <property type="project" value="InterPro"/>
</dbReference>
<dbReference type="GO" id="GO:0090729">
    <property type="term" value="F:toxin activity"/>
    <property type="evidence" value="ECO:0007669"/>
    <property type="project" value="UniProtKB-KW"/>
</dbReference>
<dbReference type="GO" id="GO:0031640">
    <property type="term" value="P:killing of cells of another organism"/>
    <property type="evidence" value="ECO:0007669"/>
    <property type="project" value="UniProtKB-KW"/>
</dbReference>
<dbReference type="GO" id="GO:0016042">
    <property type="term" value="P:lipid catabolic process"/>
    <property type="evidence" value="ECO:0007669"/>
    <property type="project" value="UniProtKB-KW"/>
</dbReference>
<dbReference type="CDD" id="cd08576">
    <property type="entry name" value="GDPD_like_SMaseD_PLD"/>
    <property type="match status" value="1"/>
</dbReference>
<dbReference type="Gene3D" id="3.20.20.190">
    <property type="entry name" value="Phosphatidylinositol (PI) phosphodiesterase"/>
    <property type="match status" value="1"/>
</dbReference>
<dbReference type="InterPro" id="IPR017946">
    <property type="entry name" value="PLC-like_Pdiesterase_TIM-brl"/>
</dbReference>
<dbReference type="Pfam" id="PF13653">
    <property type="entry name" value="GDPD_2"/>
    <property type="match status" value="1"/>
</dbReference>
<dbReference type="SUPFAM" id="SSF51695">
    <property type="entry name" value="PLC-like phosphodiesterases"/>
    <property type="match status" value="1"/>
</dbReference>
<accession>C0JAU9</accession>
<protein>
    <recommendedName>
        <fullName evidence="7">Dermonecrotic toxin LsaSicTox-alphaIB2iii</fullName>
        <ecNumber evidence="4">4.6.1.-</ecNumber>
    </recommendedName>
    <alternativeName>
        <fullName>Phospholipase D</fullName>
        <shortName>PLD</shortName>
    </alternativeName>
    <alternativeName>
        <fullName>Sphingomyelin phosphodiesterase D</fullName>
        <shortName>SMD</shortName>
        <shortName>SMase D</shortName>
        <shortName>Sphingomyelinase D</shortName>
    </alternativeName>
</protein>
<reference key="1">
    <citation type="journal article" date="2009" name="Mol. Biol. Evol.">
        <title>Molecular evolution, functional variation, and proposed nomenclature of the gene family that includes sphingomyelinase D in sicariid spider venoms.</title>
        <authorList>
            <person name="Binford G.J."/>
            <person name="Bodner M.R."/>
            <person name="Cordes M.H."/>
            <person name="Baldwin K.L."/>
            <person name="Rynerson M.R."/>
            <person name="Burns S.N."/>
            <person name="Zobel-Thropp P.A."/>
        </authorList>
    </citation>
    <scope>NUCLEOTIDE SEQUENCE [MRNA]</scope>
    <scope>NOMENCLATURE</scope>
    <source>
        <tissue>Venom gland</tissue>
    </source>
</reference>
<keyword id="KW-0204">Cytolysis</keyword>
<keyword id="KW-1061">Dermonecrotic toxin</keyword>
<keyword id="KW-1015">Disulfide bond</keyword>
<keyword id="KW-0325">Glycoprotein</keyword>
<keyword id="KW-0354">Hemolysis</keyword>
<keyword id="KW-0442">Lipid degradation</keyword>
<keyword id="KW-0443">Lipid metabolism</keyword>
<keyword id="KW-0456">Lyase</keyword>
<keyword id="KW-0460">Magnesium</keyword>
<keyword id="KW-0479">Metal-binding</keyword>
<keyword id="KW-0964">Secreted</keyword>
<keyword id="KW-0800">Toxin</keyword>
<proteinExistence type="evidence at transcript level"/>